<keyword id="KW-1003">Cell membrane</keyword>
<keyword id="KW-1015">Disulfide bond</keyword>
<keyword id="KW-0297">G-protein coupled receptor</keyword>
<keyword id="KW-0325">Glycoprotein</keyword>
<keyword id="KW-0449">Lipoprotein</keyword>
<keyword id="KW-0472">Membrane</keyword>
<keyword id="KW-0564">Palmitate</keyword>
<keyword id="KW-0675">Receptor</keyword>
<keyword id="KW-1185">Reference proteome</keyword>
<keyword id="KW-0807">Transducer</keyword>
<keyword id="KW-0812">Transmembrane</keyword>
<keyword id="KW-1133">Transmembrane helix</keyword>
<evidence type="ECO:0000250" key="1"/>
<evidence type="ECO:0000255" key="2"/>
<evidence type="ECO:0000255" key="3">
    <source>
        <dbReference type="PROSITE-ProRule" id="PRU00521"/>
    </source>
</evidence>
<evidence type="ECO:0000305" key="4"/>
<name>BRS3_MOUSE</name>
<comment type="function">
    <text>Role in sperm cell division, maturation, or function. This receptor mediates its action by association with G proteins that activate a phosphatidylinositol-calcium second messenger system.</text>
</comment>
<comment type="subunit">
    <text evidence="1">Interacts with C6orf89.</text>
</comment>
<comment type="subcellular location">
    <subcellularLocation>
        <location>Cell membrane</location>
        <topology>Multi-pass membrane protein</topology>
    </subcellularLocation>
</comment>
<comment type="similarity">
    <text evidence="3">Belongs to the G-protein coupled receptor 1 family.</text>
</comment>
<protein>
    <recommendedName>
        <fullName>Bombesin receptor subtype-3</fullName>
        <shortName>BRS-3</shortName>
    </recommendedName>
</protein>
<reference key="1">
    <citation type="journal article" date="1997" name="Brain Res.">
        <title>Cloning and expression of the neuromedin B receptor and the third subtype of bombesin receptor genes in the mouse.</title>
        <authorList>
            <person name="Ohki-Hamazaki H."/>
            <person name="Wada E."/>
            <person name="Matsui K."/>
            <person name="Wada K."/>
        </authorList>
    </citation>
    <scope>NUCLEOTIDE SEQUENCE [GENOMIC DNA]</scope>
    <source>
        <strain>129/Sv</strain>
        <tissue>Liver</tissue>
    </source>
</reference>
<reference key="2">
    <citation type="journal article" date="1998" name="Gene">
        <title>Structure and chromosomal localization of the mouse bombesin receptor subtype 3 gene.</title>
        <authorList>
            <person name="Weber H.C."/>
            <person name="Hampton L.L."/>
            <person name="Jensen R.T."/>
            <person name="Battey J.F."/>
        </authorList>
    </citation>
    <scope>NUCLEOTIDE SEQUENCE [GENOMIC DNA]</scope>
</reference>
<reference key="3">
    <citation type="journal article" date="2005" name="Science">
        <title>The transcriptional landscape of the mammalian genome.</title>
        <authorList>
            <person name="Carninci P."/>
            <person name="Kasukawa T."/>
            <person name="Katayama S."/>
            <person name="Gough J."/>
            <person name="Frith M.C."/>
            <person name="Maeda N."/>
            <person name="Oyama R."/>
            <person name="Ravasi T."/>
            <person name="Lenhard B."/>
            <person name="Wells C."/>
            <person name="Kodzius R."/>
            <person name="Shimokawa K."/>
            <person name="Bajic V.B."/>
            <person name="Brenner S.E."/>
            <person name="Batalov S."/>
            <person name="Forrest A.R."/>
            <person name="Zavolan M."/>
            <person name="Davis M.J."/>
            <person name="Wilming L.G."/>
            <person name="Aidinis V."/>
            <person name="Allen J.E."/>
            <person name="Ambesi-Impiombato A."/>
            <person name="Apweiler R."/>
            <person name="Aturaliya R.N."/>
            <person name="Bailey T.L."/>
            <person name="Bansal M."/>
            <person name="Baxter L."/>
            <person name="Beisel K.W."/>
            <person name="Bersano T."/>
            <person name="Bono H."/>
            <person name="Chalk A.M."/>
            <person name="Chiu K.P."/>
            <person name="Choudhary V."/>
            <person name="Christoffels A."/>
            <person name="Clutterbuck D.R."/>
            <person name="Crowe M.L."/>
            <person name="Dalla E."/>
            <person name="Dalrymple B.P."/>
            <person name="de Bono B."/>
            <person name="Della Gatta G."/>
            <person name="di Bernardo D."/>
            <person name="Down T."/>
            <person name="Engstrom P."/>
            <person name="Fagiolini M."/>
            <person name="Faulkner G."/>
            <person name="Fletcher C.F."/>
            <person name="Fukushima T."/>
            <person name="Furuno M."/>
            <person name="Futaki S."/>
            <person name="Gariboldi M."/>
            <person name="Georgii-Hemming P."/>
            <person name="Gingeras T.R."/>
            <person name="Gojobori T."/>
            <person name="Green R.E."/>
            <person name="Gustincich S."/>
            <person name="Harbers M."/>
            <person name="Hayashi Y."/>
            <person name="Hensch T.K."/>
            <person name="Hirokawa N."/>
            <person name="Hill D."/>
            <person name="Huminiecki L."/>
            <person name="Iacono M."/>
            <person name="Ikeo K."/>
            <person name="Iwama A."/>
            <person name="Ishikawa T."/>
            <person name="Jakt M."/>
            <person name="Kanapin A."/>
            <person name="Katoh M."/>
            <person name="Kawasawa Y."/>
            <person name="Kelso J."/>
            <person name="Kitamura H."/>
            <person name="Kitano H."/>
            <person name="Kollias G."/>
            <person name="Krishnan S.P."/>
            <person name="Kruger A."/>
            <person name="Kummerfeld S.K."/>
            <person name="Kurochkin I.V."/>
            <person name="Lareau L.F."/>
            <person name="Lazarevic D."/>
            <person name="Lipovich L."/>
            <person name="Liu J."/>
            <person name="Liuni S."/>
            <person name="McWilliam S."/>
            <person name="Madan Babu M."/>
            <person name="Madera M."/>
            <person name="Marchionni L."/>
            <person name="Matsuda H."/>
            <person name="Matsuzawa S."/>
            <person name="Miki H."/>
            <person name="Mignone F."/>
            <person name="Miyake S."/>
            <person name="Morris K."/>
            <person name="Mottagui-Tabar S."/>
            <person name="Mulder N."/>
            <person name="Nakano N."/>
            <person name="Nakauchi H."/>
            <person name="Ng P."/>
            <person name="Nilsson R."/>
            <person name="Nishiguchi S."/>
            <person name="Nishikawa S."/>
            <person name="Nori F."/>
            <person name="Ohara O."/>
            <person name="Okazaki Y."/>
            <person name="Orlando V."/>
            <person name="Pang K.C."/>
            <person name="Pavan W.J."/>
            <person name="Pavesi G."/>
            <person name="Pesole G."/>
            <person name="Petrovsky N."/>
            <person name="Piazza S."/>
            <person name="Reed J."/>
            <person name="Reid J.F."/>
            <person name="Ring B.Z."/>
            <person name="Ringwald M."/>
            <person name="Rost B."/>
            <person name="Ruan Y."/>
            <person name="Salzberg S.L."/>
            <person name="Sandelin A."/>
            <person name="Schneider C."/>
            <person name="Schoenbach C."/>
            <person name="Sekiguchi K."/>
            <person name="Semple C.A."/>
            <person name="Seno S."/>
            <person name="Sessa L."/>
            <person name="Sheng Y."/>
            <person name="Shibata Y."/>
            <person name="Shimada H."/>
            <person name="Shimada K."/>
            <person name="Silva D."/>
            <person name="Sinclair B."/>
            <person name="Sperling S."/>
            <person name="Stupka E."/>
            <person name="Sugiura K."/>
            <person name="Sultana R."/>
            <person name="Takenaka Y."/>
            <person name="Taki K."/>
            <person name="Tammoja K."/>
            <person name="Tan S.L."/>
            <person name="Tang S."/>
            <person name="Taylor M.S."/>
            <person name="Tegner J."/>
            <person name="Teichmann S.A."/>
            <person name="Ueda H.R."/>
            <person name="van Nimwegen E."/>
            <person name="Verardo R."/>
            <person name="Wei C.L."/>
            <person name="Yagi K."/>
            <person name="Yamanishi H."/>
            <person name="Zabarovsky E."/>
            <person name="Zhu S."/>
            <person name="Zimmer A."/>
            <person name="Hide W."/>
            <person name="Bult C."/>
            <person name="Grimmond S.M."/>
            <person name="Teasdale R.D."/>
            <person name="Liu E.T."/>
            <person name="Brusic V."/>
            <person name="Quackenbush J."/>
            <person name="Wahlestedt C."/>
            <person name="Mattick J.S."/>
            <person name="Hume D.A."/>
            <person name="Kai C."/>
            <person name="Sasaki D."/>
            <person name="Tomaru Y."/>
            <person name="Fukuda S."/>
            <person name="Kanamori-Katayama M."/>
            <person name="Suzuki M."/>
            <person name="Aoki J."/>
            <person name="Arakawa T."/>
            <person name="Iida J."/>
            <person name="Imamura K."/>
            <person name="Itoh M."/>
            <person name="Kato T."/>
            <person name="Kawaji H."/>
            <person name="Kawagashira N."/>
            <person name="Kawashima T."/>
            <person name="Kojima M."/>
            <person name="Kondo S."/>
            <person name="Konno H."/>
            <person name="Nakano K."/>
            <person name="Ninomiya N."/>
            <person name="Nishio T."/>
            <person name="Okada M."/>
            <person name="Plessy C."/>
            <person name="Shibata K."/>
            <person name="Shiraki T."/>
            <person name="Suzuki S."/>
            <person name="Tagami M."/>
            <person name="Waki K."/>
            <person name="Watahiki A."/>
            <person name="Okamura-Oho Y."/>
            <person name="Suzuki H."/>
            <person name="Kawai J."/>
            <person name="Hayashizaki Y."/>
        </authorList>
    </citation>
    <scope>NUCLEOTIDE SEQUENCE [LARGE SCALE MRNA]</scope>
    <source>
        <strain>C57BL/6J</strain>
        <tissue>Hypothalamus</tissue>
    </source>
</reference>
<reference key="4">
    <citation type="journal article" date="2004" name="Genome Res.">
        <title>The status, quality, and expansion of the NIH full-length cDNA project: the Mammalian Gene Collection (MGC).</title>
        <authorList>
            <consortium name="The MGC Project Team"/>
        </authorList>
    </citation>
    <scope>NUCLEOTIDE SEQUENCE [LARGE SCALE MRNA]</scope>
</reference>
<feature type="chain" id="PRO_0000069198" description="Bombesin receptor subtype-3">
    <location>
        <begin position="1"/>
        <end position="399"/>
    </location>
</feature>
<feature type="topological domain" description="Extracellular" evidence="2">
    <location>
        <begin position="1"/>
        <end position="41"/>
    </location>
</feature>
<feature type="transmembrane region" description="Helical; Name=1" evidence="2">
    <location>
        <begin position="42"/>
        <end position="63"/>
    </location>
</feature>
<feature type="topological domain" description="Cytoplasmic" evidence="2">
    <location>
        <begin position="64"/>
        <end position="82"/>
    </location>
</feature>
<feature type="transmembrane region" description="Helical; Name=2" evidence="2">
    <location>
        <begin position="83"/>
        <end position="103"/>
    </location>
</feature>
<feature type="topological domain" description="Extracellular" evidence="2">
    <location>
        <begin position="104"/>
        <end position="121"/>
    </location>
</feature>
<feature type="transmembrane region" description="Helical; Name=3" evidence="2">
    <location>
        <begin position="122"/>
        <end position="143"/>
    </location>
</feature>
<feature type="topological domain" description="Cytoplasmic" evidence="2">
    <location>
        <begin position="144"/>
        <end position="163"/>
    </location>
</feature>
<feature type="transmembrane region" description="Helical; Name=4" evidence="2">
    <location>
        <begin position="164"/>
        <end position="184"/>
    </location>
</feature>
<feature type="topological domain" description="Extracellular" evidence="2">
    <location>
        <begin position="185"/>
        <end position="220"/>
    </location>
</feature>
<feature type="transmembrane region" description="Helical; Name=5" evidence="2">
    <location>
        <begin position="221"/>
        <end position="241"/>
    </location>
</feature>
<feature type="topological domain" description="Cytoplasmic" evidence="2">
    <location>
        <begin position="242"/>
        <end position="272"/>
    </location>
</feature>
<feature type="transmembrane region" description="Helical; Name=6" evidence="2">
    <location>
        <begin position="273"/>
        <end position="293"/>
    </location>
</feature>
<feature type="topological domain" description="Extracellular" evidence="2">
    <location>
        <begin position="294"/>
        <end position="313"/>
    </location>
</feature>
<feature type="transmembrane region" description="Helical; Name=7" evidence="2">
    <location>
        <begin position="314"/>
        <end position="333"/>
    </location>
</feature>
<feature type="topological domain" description="Cytoplasmic" evidence="2">
    <location>
        <begin position="334"/>
        <end position="399"/>
    </location>
</feature>
<feature type="lipid moiety-binding region" description="S-palmitoyl cysteine" evidence="1">
    <location>
        <position position="347"/>
    </location>
</feature>
<feature type="glycosylation site" description="N-linked (GlcNAc...) asparagine" evidence="2">
    <location>
        <position position="10"/>
    </location>
</feature>
<feature type="glycosylation site" description="N-linked (GlcNAc...) asparagine" evidence="2">
    <location>
        <position position="18"/>
    </location>
</feature>
<feature type="glycosylation site" description="N-linked (GlcNAc...) asparagine" evidence="2">
    <location>
        <position position="29"/>
    </location>
</feature>
<feature type="disulfide bond" evidence="3">
    <location>
        <begin position="120"/>
        <end position="203"/>
    </location>
</feature>
<feature type="sequence conflict" description="In Ref. 2; AAC40133." evidence="4" ref="2">
    <original>VS</original>
    <variation>AP</variation>
    <location>
        <begin position="27"/>
        <end position="28"/>
    </location>
</feature>
<proteinExistence type="evidence at transcript level"/>
<accession>O54798</accession>
<accession>O88790</accession>
<accession>Q544G9</accession>
<dbReference type="EMBL" id="AB010280">
    <property type="protein sequence ID" value="BAA24404.1"/>
    <property type="molecule type" value="Genomic_DNA"/>
</dbReference>
<dbReference type="EMBL" id="U84901">
    <property type="protein sequence ID" value="AAC40133.1"/>
    <property type="molecule type" value="Genomic_DNA"/>
</dbReference>
<dbReference type="EMBL" id="U84899">
    <property type="protein sequence ID" value="AAC40133.1"/>
    <property type="status" value="JOINED"/>
    <property type="molecule type" value="Genomic_DNA"/>
</dbReference>
<dbReference type="EMBL" id="U84900">
    <property type="protein sequence ID" value="AAC40133.1"/>
    <property type="status" value="JOINED"/>
    <property type="molecule type" value="Genomic_DNA"/>
</dbReference>
<dbReference type="EMBL" id="AK038616">
    <property type="protein sequence ID" value="BAC30064.1"/>
    <property type="molecule type" value="mRNA"/>
</dbReference>
<dbReference type="EMBL" id="BC106961">
    <property type="protein sequence ID" value="AAI06962.1"/>
    <property type="molecule type" value="mRNA"/>
</dbReference>
<dbReference type="EMBL" id="BC106962">
    <property type="protein sequence ID" value="AAI06963.1"/>
    <property type="molecule type" value="mRNA"/>
</dbReference>
<dbReference type="CCDS" id="CCDS30150.1"/>
<dbReference type="RefSeq" id="NP_033896.2">
    <property type="nucleotide sequence ID" value="NM_009766.3"/>
</dbReference>
<dbReference type="SMR" id="O54798"/>
<dbReference type="FunCoup" id="O54798">
    <property type="interactions" value="514"/>
</dbReference>
<dbReference type="STRING" id="10090.ENSMUSP00000033464"/>
<dbReference type="BindingDB" id="O54798"/>
<dbReference type="ChEMBL" id="CHEMBL1075140"/>
<dbReference type="GuidetoPHARMACOLOGY" id="40"/>
<dbReference type="GlyCosmos" id="O54798">
    <property type="glycosylation" value="3 sites, No reported glycans"/>
</dbReference>
<dbReference type="GlyGen" id="O54798">
    <property type="glycosylation" value="3 sites"/>
</dbReference>
<dbReference type="PhosphoSitePlus" id="O54798"/>
<dbReference type="PaxDb" id="10090-ENSMUSP00000033464"/>
<dbReference type="ProteomicsDB" id="273845"/>
<dbReference type="Antibodypedia" id="580">
    <property type="antibodies" value="466 antibodies from 30 providers"/>
</dbReference>
<dbReference type="DNASU" id="12209"/>
<dbReference type="Ensembl" id="ENSMUST00000033464.4">
    <property type="protein sequence ID" value="ENSMUSP00000033464.4"/>
    <property type="gene ID" value="ENSMUSG00000031130.4"/>
</dbReference>
<dbReference type="GeneID" id="12209"/>
<dbReference type="KEGG" id="mmu:12209"/>
<dbReference type="UCSC" id="uc009tgu.1">
    <property type="organism name" value="mouse"/>
</dbReference>
<dbReference type="AGR" id="MGI:1100501"/>
<dbReference type="CTD" id="680"/>
<dbReference type="MGI" id="MGI:1100501">
    <property type="gene designation" value="Brs3"/>
</dbReference>
<dbReference type="VEuPathDB" id="HostDB:ENSMUSG00000031130"/>
<dbReference type="eggNOG" id="KOG3656">
    <property type="taxonomic scope" value="Eukaryota"/>
</dbReference>
<dbReference type="GeneTree" id="ENSGT01120000271837"/>
<dbReference type="HOGENOM" id="CLU_009579_6_2_1"/>
<dbReference type="InParanoid" id="O54798"/>
<dbReference type="OMA" id="TNKGRTG"/>
<dbReference type="OrthoDB" id="10049706at2759"/>
<dbReference type="PhylomeDB" id="O54798"/>
<dbReference type="TreeFam" id="TF331292"/>
<dbReference type="Reactome" id="R-MMU-375276">
    <property type="pathway name" value="Peptide ligand-binding receptors"/>
</dbReference>
<dbReference type="Reactome" id="R-MMU-416476">
    <property type="pathway name" value="G alpha (q) signalling events"/>
</dbReference>
<dbReference type="BioGRID-ORCS" id="12209">
    <property type="hits" value="4 hits in 79 CRISPR screens"/>
</dbReference>
<dbReference type="PRO" id="PR:O54798"/>
<dbReference type="Proteomes" id="UP000000589">
    <property type="component" value="Chromosome X"/>
</dbReference>
<dbReference type="RNAct" id="O54798">
    <property type="molecule type" value="protein"/>
</dbReference>
<dbReference type="Bgee" id="ENSMUSG00000031130">
    <property type="expression patterns" value="Expressed in gastrula and 14 other cell types or tissues"/>
</dbReference>
<dbReference type="GO" id="GO:0005886">
    <property type="term" value="C:plasma membrane"/>
    <property type="evidence" value="ECO:0007669"/>
    <property type="project" value="UniProtKB-SubCell"/>
</dbReference>
<dbReference type="GO" id="GO:0004946">
    <property type="term" value="F:bombesin receptor activity"/>
    <property type="evidence" value="ECO:0007669"/>
    <property type="project" value="InterPro"/>
</dbReference>
<dbReference type="FunFam" id="1.20.1070.10:FF:000166">
    <property type="entry name" value="Bombesin receptor subtype-3"/>
    <property type="match status" value="1"/>
</dbReference>
<dbReference type="Gene3D" id="1.20.1070.10">
    <property type="entry name" value="Rhodopsin 7-helix transmembrane proteins"/>
    <property type="match status" value="1"/>
</dbReference>
<dbReference type="InterPro" id="IPR001560">
    <property type="entry name" value="Bombesin_rcpt_3"/>
</dbReference>
<dbReference type="InterPro" id="IPR001556">
    <property type="entry name" value="Bombsn_rcpt-like"/>
</dbReference>
<dbReference type="InterPro" id="IPR000276">
    <property type="entry name" value="GPCR_Rhodpsn"/>
</dbReference>
<dbReference type="InterPro" id="IPR017452">
    <property type="entry name" value="GPCR_Rhodpsn_7TM"/>
</dbReference>
<dbReference type="PANTHER" id="PTHR45695:SF6">
    <property type="entry name" value="BOMBESIN RECEPTOR SUBTYPE-3"/>
    <property type="match status" value="1"/>
</dbReference>
<dbReference type="PANTHER" id="PTHR45695">
    <property type="entry name" value="LEUCOKININ RECEPTOR-RELATED"/>
    <property type="match status" value="1"/>
</dbReference>
<dbReference type="Pfam" id="PF00001">
    <property type="entry name" value="7tm_1"/>
    <property type="match status" value="1"/>
</dbReference>
<dbReference type="PRINTS" id="PR00637">
    <property type="entry name" value="BOMBESIN3R"/>
</dbReference>
<dbReference type="PRINTS" id="PR00358">
    <property type="entry name" value="BOMBESINR"/>
</dbReference>
<dbReference type="PRINTS" id="PR00237">
    <property type="entry name" value="GPCRRHODOPSN"/>
</dbReference>
<dbReference type="SMART" id="SM01381">
    <property type="entry name" value="7TM_GPCR_Srsx"/>
    <property type="match status" value="1"/>
</dbReference>
<dbReference type="SUPFAM" id="SSF81321">
    <property type="entry name" value="Family A G protein-coupled receptor-like"/>
    <property type="match status" value="1"/>
</dbReference>
<dbReference type="PROSITE" id="PS00237">
    <property type="entry name" value="G_PROTEIN_RECEP_F1_1"/>
    <property type="match status" value="1"/>
</dbReference>
<dbReference type="PROSITE" id="PS50262">
    <property type="entry name" value="G_PROTEIN_RECEP_F1_2"/>
    <property type="match status" value="1"/>
</dbReference>
<gene>
    <name type="primary">Brs3</name>
</gene>
<organism>
    <name type="scientific">Mus musculus</name>
    <name type="common">Mouse</name>
    <dbReference type="NCBI Taxonomy" id="10090"/>
    <lineage>
        <taxon>Eukaryota</taxon>
        <taxon>Metazoa</taxon>
        <taxon>Chordata</taxon>
        <taxon>Craniata</taxon>
        <taxon>Vertebrata</taxon>
        <taxon>Euteleostomi</taxon>
        <taxon>Mammalia</taxon>
        <taxon>Eutheria</taxon>
        <taxon>Euarchontoglires</taxon>
        <taxon>Glires</taxon>
        <taxon>Rodentia</taxon>
        <taxon>Myomorpha</taxon>
        <taxon>Muroidea</taxon>
        <taxon>Muridae</taxon>
        <taxon>Murinae</taxon>
        <taxon>Mus</taxon>
        <taxon>Mus</taxon>
    </lineage>
</organism>
<sequence length="399" mass="44229">MSQRQSQSPNQTLISITNDTETSSSVVSNDTTHKGWTGDNSPGIEALCAIYITYAGIISVGILGNAILIKVFFKTKSMQTVPNIFITSLAFGDLLLLLTCVPVDATHYLAEGWLFGKVGCKVLSFIRLTSVGVSVFTLTILSADRYKAVVKPLERQPPNAILKTCAKAGGIWIVSMIFALPEAIFSNVYTFQDPNRNVTFESCNSYPISERLLQEIHSLLCFLVFYIIPLSIISVYYSLIARTLYKSTLNIPTEEQSHARKQIESRKRIAKTVLVLVALFALCWLPNHLLYLYHSFTYESYANHSDVPFVIIIFSRVLAFSNSCVNPFALYWLSKTFQQHFKAQLCCLKAEQPEPPLGDIPLNNLTVMGRVPATGSAHVSEISVTLFSGSSAKKGEDKV</sequence>